<accession>O62554</accession>
<organism>
    <name type="scientific">Mytilus edulis</name>
    <name type="common">Blue mussel</name>
    <dbReference type="NCBI Taxonomy" id="6550"/>
    <lineage>
        <taxon>Eukaryota</taxon>
        <taxon>Metazoa</taxon>
        <taxon>Spiralia</taxon>
        <taxon>Lophotrochozoa</taxon>
        <taxon>Mollusca</taxon>
        <taxon>Bivalvia</taxon>
        <taxon>Autobranchia</taxon>
        <taxon>Pteriomorphia</taxon>
        <taxon>Mytilida</taxon>
        <taxon>Mytiloidea</taxon>
        <taxon>Mytilidae</taxon>
        <taxon>Mytilinae</taxon>
        <taxon>Mytilus</taxon>
    </lineage>
</organism>
<feature type="initiator methionine" description="Removed" evidence="1">
    <location>
        <position position="1"/>
    </location>
</feature>
<feature type="chain" id="PRO_0000197325" description="Metallothionein 10-Ib">
    <location>
        <begin position="2"/>
        <end position="73"/>
    </location>
</feature>
<feature type="binding site" evidence="2">
    <location>
        <position position="15"/>
    </location>
    <ligand>
        <name>Cd(2+)</name>
        <dbReference type="ChEBI" id="CHEBI:48775"/>
        <label>1</label>
    </ligand>
</feature>
<feature type="binding site" evidence="2">
    <location>
        <position position="19"/>
    </location>
    <ligand>
        <name>Cd(2+)</name>
        <dbReference type="ChEBI" id="CHEBI:48775"/>
        <label>1</label>
    </ligand>
</feature>
<feature type="binding site" evidence="2">
    <location>
        <position position="19"/>
    </location>
    <ligand>
        <name>Cd(2+)</name>
        <dbReference type="ChEBI" id="CHEBI:48775"/>
        <label>2</label>
    </ligand>
</feature>
<feature type="binding site" evidence="2">
    <location>
        <position position="24"/>
    </location>
    <ligand>
        <name>Cd(2+)</name>
        <dbReference type="ChEBI" id="CHEBI:48775"/>
        <label>2</label>
    </ligand>
</feature>
<feature type="binding site" evidence="2">
    <location>
        <position position="26"/>
    </location>
    <ligand>
        <name>Cd(2+)</name>
        <dbReference type="ChEBI" id="CHEBI:48775"/>
        <label>3</label>
    </ligand>
</feature>
<feature type="binding site" evidence="2">
    <location>
        <position position="30"/>
    </location>
    <ligand>
        <name>Cd(2+)</name>
        <dbReference type="ChEBI" id="CHEBI:48775"/>
        <label>3</label>
    </ligand>
</feature>
<feature type="binding site" evidence="2">
    <location>
        <position position="32"/>
    </location>
    <ligand>
        <name>Cd(2+)</name>
        <dbReference type="ChEBI" id="CHEBI:48775"/>
        <label>1</label>
    </ligand>
</feature>
<feature type="binding site" evidence="2">
    <location>
        <position position="32"/>
    </location>
    <ligand>
        <name>Cd(2+)</name>
        <dbReference type="ChEBI" id="CHEBI:48775"/>
        <label>3</label>
    </ligand>
</feature>
<feature type="binding site" evidence="2">
    <location>
        <position position="37"/>
    </location>
    <ligand>
        <name>Cd(2+)</name>
        <dbReference type="ChEBI" id="CHEBI:48775"/>
        <label>1</label>
    </ligand>
</feature>
<feature type="binding site" evidence="2">
    <location>
        <position position="39"/>
    </location>
    <ligand>
        <name>Cd(2+)</name>
        <dbReference type="ChEBI" id="CHEBI:48775"/>
        <label>2</label>
    </ligand>
</feature>
<feature type="binding site" evidence="2">
    <location>
        <position position="42"/>
    </location>
    <ligand>
        <name>Cd(2+)</name>
        <dbReference type="ChEBI" id="CHEBI:48775"/>
        <label>2</label>
    </ligand>
</feature>
<feature type="binding site" evidence="2">
    <location>
        <position position="42"/>
    </location>
    <ligand>
        <name>Cd(2+)</name>
        <dbReference type="ChEBI" id="CHEBI:48775"/>
        <label>3</label>
    </ligand>
</feature>
<feature type="binding site" evidence="2">
    <location>
        <position position="46"/>
    </location>
    <ligand>
        <name>Cd(2+)</name>
        <dbReference type="ChEBI" id="CHEBI:48775"/>
        <label>4</label>
    </ligand>
</feature>
<feature type="binding site" evidence="2">
    <location>
        <position position="48"/>
    </location>
    <ligand>
        <name>Cd(2+)</name>
        <dbReference type="ChEBI" id="CHEBI:48775"/>
        <label>5</label>
    </ligand>
</feature>
<feature type="binding site" evidence="2">
    <location>
        <position position="52"/>
    </location>
    <ligand>
        <name>Cd(2+)</name>
        <dbReference type="ChEBI" id="CHEBI:48775"/>
        <label>5</label>
    </ligand>
</feature>
<feature type="binding site" evidence="2">
    <location>
        <position position="54"/>
    </location>
    <ligand>
        <name>Cd(2+)</name>
        <dbReference type="ChEBI" id="CHEBI:48775"/>
        <label>5</label>
    </ligand>
</feature>
<feature type="binding site" evidence="2">
    <location>
        <position position="54"/>
    </location>
    <ligand>
        <name>Cd(2+)</name>
        <dbReference type="ChEBI" id="CHEBI:48775"/>
        <label>6</label>
    </ligand>
</feature>
<feature type="binding site" evidence="2">
    <location>
        <position position="58"/>
    </location>
    <ligand>
        <name>Cd(2+)</name>
        <dbReference type="ChEBI" id="CHEBI:48775"/>
        <label>4</label>
    </ligand>
</feature>
<feature type="binding site" evidence="2">
    <location>
        <position position="58"/>
    </location>
    <ligand>
        <name>Cd(2+)</name>
        <dbReference type="ChEBI" id="CHEBI:48775"/>
        <label>5</label>
    </ligand>
</feature>
<feature type="binding site" evidence="2">
    <location>
        <position position="64"/>
    </location>
    <ligand>
        <name>Cd(2+)</name>
        <dbReference type="ChEBI" id="CHEBI:48775"/>
        <label>4</label>
    </ligand>
</feature>
<feature type="binding site" evidence="2">
    <location>
        <position position="66"/>
    </location>
    <ligand>
        <name>Cd(2+)</name>
        <dbReference type="ChEBI" id="CHEBI:48775"/>
        <label>6</label>
    </ligand>
</feature>
<feature type="binding site" evidence="2">
    <location>
        <position position="70"/>
    </location>
    <ligand>
        <name>Cd(2+)</name>
        <dbReference type="ChEBI" id="CHEBI:48775"/>
        <label>6</label>
    </ligand>
</feature>
<feature type="binding site" evidence="2">
    <location>
        <position position="72"/>
    </location>
    <ligand>
        <name>Cd(2+)</name>
        <dbReference type="ChEBI" id="CHEBI:48775"/>
        <label>4</label>
    </ligand>
</feature>
<feature type="binding site" evidence="2">
    <location>
        <position position="72"/>
    </location>
    <ligand>
        <name>Cd(2+)</name>
        <dbReference type="ChEBI" id="CHEBI:48775"/>
        <label>6</label>
    </ligand>
</feature>
<name>MT10B_MYTED</name>
<protein>
    <recommendedName>
        <fullName>Metallothionein 10-Ib</fullName>
        <shortName>MT-10-Ib</shortName>
    </recommendedName>
</protein>
<proteinExistence type="evidence at transcript level"/>
<evidence type="ECO:0000250" key="1"/>
<evidence type="ECO:0000250" key="2">
    <source>
        <dbReference type="UniProtKB" id="P33187"/>
    </source>
</evidence>
<evidence type="ECO:0000305" key="3"/>
<sequence>MPAPCNCIETNVCICDTGCSGEGCRCGDACKCAGADCKCSGCKVVCKCSGRCECGKGCTGPSTCKCAPGCSCK</sequence>
<dbReference type="EMBL" id="AJ005452">
    <property type="protein sequence ID" value="CAA06549.1"/>
    <property type="molecule type" value="mRNA"/>
</dbReference>
<dbReference type="SMR" id="O62554"/>
<dbReference type="GO" id="GO:0046872">
    <property type="term" value="F:metal ion binding"/>
    <property type="evidence" value="ECO:0007669"/>
    <property type="project" value="UniProtKB-KW"/>
</dbReference>
<dbReference type="InterPro" id="IPR001008">
    <property type="entry name" value="Metalthion_mollusc"/>
</dbReference>
<dbReference type="PRINTS" id="PR00875">
    <property type="entry name" value="MTMOLLUSC"/>
</dbReference>
<comment type="function">
    <text>The metallothioneins are involved in the cellular sequestration of toxic metal ions.</text>
</comment>
<comment type="subunit">
    <text>Monomer.</text>
</comment>
<comment type="induction">
    <text>By cadmium.</text>
</comment>
<comment type="similarity">
    <text evidence="3">Belongs to the metallothionein superfamily. Type 2 family.</text>
</comment>
<keyword id="KW-0104">Cadmium</keyword>
<keyword id="KW-0479">Metal-binding</keyword>
<keyword id="KW-0480">Metal-thiolate cluster</keyword>
<reference key="1">
    <citation type="journal article" date="1999" name="Comp. Biochem. Physiol.">
        <title>Cloning and characterization of metallothionein cDNAs in the mussel Mytilus edulis L. digestive gland.</title>
        <authorList>
            <person name="Barsyte D."/>
            <person name="White K.N."/>
            <person name="Lovejoy D.A."/>
        </authorList>
    </citation>
    <scope>NUCLEOTIDE SEQUENCE [MRNA]</scope>
    <source>
        <tissue>Digestive gland</tissue>
    </source>
</reference>